<sequence length="89" mass="10188">MAKESMKAREVKREKTVAKYAEKRKALLEAGDYEGLQRLPKNASPVRLHNRCKLTGRPRGYIRQFGISRVTFREMANNGLIPGVKKASW</sequence>
<gene>
    <name evidence="1" type="primary">rpsN</name>
    <name type="ordered locus">Fjoh_0384</name>
</gene>
<proteinExistence type="inferred from homology"/>
<accession>A5FN08</accession>
<feature type="chain" id="PRO_1000128404" description="Small ribosomal subunit protein uS14">
    <location>
        <begin position="1"/>
        <end position="89"/>
    </location>
</feature>
<reference key="1">
    <citation type="journal article" date="2009" name="Appl. Environ. Microbiol.">
        <title>Novel features of the polysaccharide-digesting gliding bacterium Flavobacterium johnsoniae as revealed by genome sequence analysis.</title>
        <authorList>
            <person name="McBride M.J."/>
            <person name="Xie G."/>
            <person name="Martens E.C."/>
            <person name="Lapidus A."/>
            <person name="Henrissat B."/>
            <person name="Rhodes R.G."/>
            <person name="Goltsman E."/>
            <person name="Wang W."/>
            <person name="Xu J."/>
            <person name="Hunnicutt D.W."/>
            <person name="Staroscik A.M."/>
            <person name="Hoover T.R."/>
            <person name="Cheng Y.Q."/>
            <person name="Stein J.L."/>
        </authorList>
    </citation>
    <scope>NUCLEOTIDE SEQUENCE [LARGE SCALE GENOMIC DNA]</scope>
    <source>
        <strain>ATCC 17061 / DSM 2064 / JCM 8514 / BCRC 14874 / CCUG 350202 / NBRC 14942 / NCIMB 11054 / UW101</strain>
    </source>
</reference>
<keyword id="KW-0687">Ribonucleoprotein</keyword>
<keyword id="KW-0689">Ribosomal protein</keyword>
<keyword id="KW-0694">RNA-binding</keyword>
<keyword id="KW-0699">rRNA-binding</keyword>
<evidence type="ECO:0000255" key="1">
    <source>
        <dbReference type="HAMAP-Rule" id="MF_00537"/>
    </source>
</evidence>
<evidence type="ECO:0000305" key="2"/>
<dbReference type="EMBL" id="CP000685">
    <property type="protein sequence ID" value="ABQ03420.1"/>
    <property type="molecule type" value="Genomic_DNA"/>
</dbReference>
<dbReference type="RefSeq" id="WP_008464305.1">
    <property type="nucleotide sequence ID" value="NZ_MUGZ01000005.1"/>
</dbReference>
<dbReference type="SMR" id="A5FN08"/>
<dbReference type="STRING" id="376686.Fjoh_0384"/>
<dbReference type="KEGG" id="fjo:Fjoh_0384"/>
<dbReference type="eggNOG" id="COG0199">
    <property type="taxonomic scope" value="Bacteria"/>
</dbReference>
<dbReference type="HOGENOM" id="CLU_139869_0_0_10"/>
<dbReference type="OrthoDB" id="9810484at2"/>
<dbReference type="Proteomes" id="UP000006694">
    <property type="component" value="Chromosome"/>
</dbReference>
<dbReference type="GO" id="GO:0005737">
    <property type="term" value="C:cytoplasm"/>
    <property type="evidence" value="ECO:0007669"/>
    <property type="project" value="UniProtKB-ARBA"/>
</dbReference>
<dbReference type="GO" id="GO:0015935">
    <property type="term" value="C:small ribosomal subunit"/>
    <property type="evidence" value="ECO:0007669"/>
    <property type="project" value="TreeGrafter"/>
</dbReference>
<dbReference type="GO" id="GO:0019843">
    <property type="term" value="F:rRNA binding"/>
    <property type="evidence" value="ECO:0007669"/>
    <property type="project" value="UniProtKB-UniRule"/>
</dbReference>
<dbReference type="GO" id="GO:0003735">
    <property type="term" value="F:structural constituent of ribosome"/>
    <property type="evidence" value="ECO:0007669"/>
    <property type="project" value="InterPro"/>
</dbReference>
<dbReference type="GO" id="GO:0006412">
    <property type="term" value="P:translation"/>
    <property type="evidence" value="ECO:0007669"/>
    <property type="project" value="UniProtKB-UniRule"/>
</dbReference>
<dbReference type="Gene3D" id="4.10.830.10">
    <property type="entry name" value="30s Ribosomal Protein S14, Chain N"/>
    <property type="match status" value="1"/>
</dbReference>
<dbReference type="HAMAP" id="MF_00537">
    <property type="entry name" value="Ribosomal_uS14_1"/>
    <property type="match status" value="1"/>
</dbReference>
<dbReference type="InterPro" id="IPR001209">
    <property type="entry name" value="Ribosomal_uS14"/>
</dbReference>
<dbReference type="InterPro" id="IPR023036">
    <property type="entry name" value="Ribosomal_uS14_bac/plastid"/>
</dbReference>
<dbReference type="InterPro" id="IPR018271">
    <property type="entry name" value="Ribosomal_uS14_CS"/>
</dbReference>
<dbReference type="InterPro" id="IPR043140">
    <property type="entry name" value="Ribosomal_uS14_sf"/>
</dbReference>
<dbReference type="NCBIfam" id="NF006477">
    <property type="entry name" value="PRK08881.1"/>
    <property type="match status" value="1"/>
</dbReference>
<dbReference type="PANTHER" id="PTHR19836">
    <property type="entry name" value="30S RIBOSOMAL PROTEIN S14"/>
    <property type="match status" value="1"/>
</dbReference>
<dbReference type="PANTHER" id="PTHR19836:SF19">
    <property type="entry name" value="SMALL RIBOSOMAL SUBUNIT PROTEIN US14M"/>
    <property type="match status" value="1"/>
</dbReference>
<dbReference type="Pfam" id="PF00253">
    <property type="entry name" value="Ribosomal_S14"/>
    <property type="match status" value="1"/>
</dbReference>
<dbReference type="SUPFAM" id="SSF57716">
    <property type="entry name" value="Glucocorticoid receptor-like (DNA-binding domain)"/>
    <property type="match status" value="1"/>
</dbReference>
<dbReference type="PROSITE" id="PS00527">
    <property type="entry name" value="RIBOSOMAL_S14"/>
    <property type="match status" value="1"/>
</dbReference>
<protein>
    <recommendedName>
        <fullName evidence="1">Small ribosomal subunit protein uS14</fullName>
    </recommendedName>
    <alternativeName>
        <fullName evidence="2">30S ribosomal protein S14</fullName>
    </alternativeName>
</protein>
<organism>
    <name type="scientific">Flavobacterium johnsoniae (strain ATCC 17061 / DSM 2064 / JCM 8514 / BCRC 14874 / CCUG 350202 / NBRC 14942 / NCIMB 11054 / UW101)</name>
    <name type="common">Cytophaga johnsonae</name>
    <dbReference type="NCBI Taxonomy" id="376686"/>
    <lineage>
        <taxon>Bacteria</taxon>
        <taxon>Pseudomonadati</taxon>
        <taxon>Bacteroidota</taxon>
        <taxon>Flavobacteriia</taxon>
        <taxon>Flavobacteriales</taxon>
        <taxon>Flavobacteriaceae</taxon>
        <taxon>Flavobacterium</taxon>
    </lineage>
</organism>
<comment type="function">
    <text evidence="1">Binds 16S rRNA, required for the assembly of 30S particles and may also be responsible for determining the conformation of the 16S rRNA at the A site.</text>
</comment>
<comment type="subunit">
    <text evidence="1">Part of the 30S ribosomal subunit. Contacts proteins S3 and S10.</text>
</comment>
<comment type="similarity">
    <text evidence="1">Belongs to the universal ribosomal protein uS14 family.</text>
</comment>
<name>RS14_FLAJ1</name>